<proteinExistence type="evidence at transcript level"/>
<comment type="function">
    <molecule>Corticotropin</molecule>
    <text>Stimulates the adrenal glands to release cortisol.</text>
</comment>
<comment type="function">
    <molecule>Melanocyte-stimulating hormone alpha</molecule>
    <text>Anorexigenic peptide. Increases the pigmentation of skin by increasing melanin production in melanocytes.</text>
</comment>
<comment type="function">
    <molecule>Melanocyte-stimulating hormone beta</molecule>
    <text>Increases the pigmentation of skin by increasing melanin production in melanocytes.</text>
</comment>
<comment type="function">
    <molecule>Beta-endorphin</molecule>
    <text>Endogenous orexigenic opiate.</text>
</comment>
<comment type="function">
    <molecule>Met-enkephalin</molecule>
    <text>Endogenous opiate.</text>
</comment>
<comment type="subcellular location">
    <subcellularLocation>
        <location evidence="2">Secreted</location>
    </subcellularLocation>
    <text evidence="2">Melanocyte-stimulating hormone alpha and beta-endorphin are stored in separate granules in hypothalamic POMC neurons, suggesting that secretion may be under the control of different regulatory mechanisms.</text>
</comment>
<comment type="PTM">
    <text>Specific enzymatic cleavages at paired basic residues yield the different active peptides.</text>
</comment>
<comment type="similarity">
    <text evidence="4">Belongs to the POMC family.</text>
</comment>
<protein>
    <recommendedName>
        <fullName>Pro-opiomelanocortin</fullName>
        <shortName>POMC</shortName>
    </recommendedName>
    <alternativeName>
        <fullName>Corticotropin-lipotropin</fullName>
    </alternativeName>
    <component>
        <recommendedName>
            <fullName>NPP</fullName>
        </recommendedName>
    </component>
    <component>
        <recommendedName>
            <fullName>Melanotropin gamma</fullName>
        </recommendedName>
        <alternativeName>
            <fullName>Gamma-MSH</fullName>
        </alternativeName>
    </component>
    <component>
        <recommendedName>
            <fullName>Corticotropin</fullName>
        </recommendedName>
        <alternativeName>
            <fullName>Adrenocorticotropic hormone</fullName>
            <shortName>ACTH</shortName>
        </alternativeName>
    </component>
    <component>
        <recommendedName>
            <fullName>Melanocyte-stimulating hormone alpha</fullName>
            <shortName>Alpha-MSH</shortName>
        </recommendedName>
        <alternativeName>
            <fullName>Melanotropin alpha</fullName>
        </alternativeName>
    </component>
    <component>
        <recommendedName>
            <fullName>Corticotropin-like intermediary peptide</fullName>
            <shortName>CLIP</shortName>
        </recommendedName>
    </component>
    <component>
        <recommendedName>
            <fullName>Lipotropin beta</fullName>
        </recommendedName>
        <alternativeName>
            <fullName>Beta-LPH</fullName>
        </alternativeName>
    </component>
    <component>
        <recommendedName>
            <fullName>Lipotropin gamma</fullName>
        </recommendedName>
        <alternativeName>
            <fullName>Gamma-LPH</fullName>
        </alternativeName>
    </component>
    <component>
        <recommendedName>
            <fullName>Melanocyte-stimulating hormone beta</fullName>
            <shortName>Beta-MSH</shortName>
        </recommendedName>
        <alternativeName>
            <fullName>Melanotropin beta</fullName>
        </alternativeName>
    </component>
    <component>
        <recommendedName>
            <fullName>Beta-endorphin</fullName>
        </recommendedName>
    </component>
    <component>
        <recommendedName>
            <fullName>Met-enkephalin</fullName>
        </recommendedName>
    </component>
</protein>
<gene>
    <name type="primary">pomc</name>
</gene>
<name>COLI_PELRI</name>
<dbReference type="EMBL" id="M62770">
    <property type="protein sequence ID" value="AAA49531.1"/>
    <property type="molecule type" value="mRNA"/>
</dbReference>
<dbReference type="PIR" id="A36402">
    <property type="entry name" value="A36402"/>
</dbReference>
<dbReference type="SMR" id="P22923"/>
<dbReference type="GlyCosmos" id="P22923">
    <property type="glycosylation" value="1 site, No reported glycans"/>
</dbReference>
<dbReference type="GO" id="GO:0005615">
    <property type="term" value="C:extracellular space"/>
    <property type="evidence" value="ECO:0007669"/>
    <property type="project" value="TreeGrafter"/>
</dbReference>
<dbReference type="GO" id="GO:0030141">
    <property type="term" value="C:secretory granule"/>
    <property type="evidence" value="ECO:0007669"/>
    <property type="project" value="TreeGrafter"/>
</dbReference>
<dbReference type="GO" id="GO:0001664">
    <property type="term" value="F:G protein-coupled receptor binding"/>
    <property type="evidence" value="ECO:0007669"/>
    <property type="project" value="TreeGrafter"/>
</dbReference>
<dbReference type="GO" id="GO:0005179">
    <property type="term" value="F:hormone activity"/>
    <property type="evidence" value="ECO:0007669"/>
    <property type="project" value="UniProtKB-KW"/>
</dbReference>
<dbReference type="GO" id="GO:0007218">
    <property type="term" value="P:neuropeptide signaling pathway"/>
    <property type="evidence" value="ECO:0007669"/>
    <property type="project" value="UniProtKB-KW"/>
</dbReference>
<dbReference type="GO" id="GO:2000852">
    <property type="term" value="P:regulation of corticosterone secretion"/>
    <property type="evidence" value="ECO:0007669"/>
    <property type="project" value="TreeGrafter"/>
</dbReference>
<dbReference type="InterPro" id="IPR013531">
    <property type="entry name" value="Mcrtin_ACTH_cent"/>
</dbReference>
<dbReference type="InterPro" id="IPR013593">
    <property type="entry name" value="Melanocortin_N"/>
</dbReference>
<dbReference type="InterPro" id="IPR013532">
    <property type="entry name" value="Opioid_neuropept"/>
</dbReference>
<dbReference type="InterPro" id="IPR001941">
    <property type="entry name" value="PMOC"/>
</dbReference>
<dbReference type="InterPro" id="IPR050878">
    <property type="entry name" value="POMC-derived_peptides"/>
</dbReference>
<dbReference type="PANTHER" id="PTHR11416">
    <property type="entry name" value="PRO-OPIOMELANOCORTIN"/>
    <property type="match status" value="1"/>
</dbReference>
<dbReference type="PANTHER" id="PTHR11416:SF7">
    <property type="entry name" value="PRO-OPIOMELANOCORTIN"/>
    <property type="match status" value="1"/>
</dbReference>
<dbReference type="Pfam" id="PF00976">
    <property type="entry name" value="ACTH_domain"/>
    <property type="match status" value="3"/>
</dbReference>
<dbReference type="Pfam" id="PF08384">
    <property type="entry name" value="NPP"/>
    <property type="match status" value="1"/>
</dbReference>
<dbReference type="Pfam" id="PF08035">
    <property type="entry name" value="Op_neuropeptide"/>
    <property type="match status" value="1"/>
</dbReference>
<dbReference type="PRINTS" id="PR00383">
    <property type="entry name" value="MELANOCORTIN"/>
</dbReference>
<dbReference type="SMART" id="SM01363">
    <property type="entry name" value="ACTH_domain"/>
    <property type="match status" value="3"/>
</dbReference>
<dbReference type="SMART" id="SM01364">
    <property type="entry name" value="NPP"/>
    <property type="match status" value="1"/>
</dbReference>
<dbReference type="SMART" id="SM01365">
    <property type="entry name" value="Op_neuropeptide"/>
    <property type="match status" value="1"/>
</dbReference>
<accession>P22923</accession>
<reference key="1">
    <citation type="journal article" date="1990" name="Biochem. Biophys. Res. Commun.">
        <title>Characterization of the cDNA encoding proopiomelanocortin in the frog Rana ridibunda.</title>
        <authorList>
            <person name="Hilario E."/>
            <person name="Lihrmann I."/>
            <person name="Vaudry H."/>
        </authorList>
    </citation>
    <scope>NUCLEOTIDE SEQUENCE [MRNA]</scope>
</reference>
<feature type="signal peptide" evidence="1">
    <location>
        <begin position="1"/>
        <end position="25"/>
    </location>
</feature>
<feature type="peptide" id="PRO_0000025133" description="NPP" evidence="1">
    <location>
        <begin position="26"/>
        <end position="101"/>
    </location>
</feature>
<feature type="peptide" id="PRO_0000025134" description="Melanotropin gamma" evidence="1">
    <location>
        <begin position="76"/>
        <end position="86"/>
    </location>
</feature>
<feature type="propeptide" id="PRO_0000025135">
    <location>
        <begin position="104"/>
        <end position="138"/>
    </location>
</feature>
<feature type="peptide" id="PRO_0000025136" description="Corticotropin" evidence="1">
    <location>
        <begin position="141"/>
        <end position="179"/>
    </location>
</feature>
<feature type="peptide" id="PRO_0000025137" description="Melanocyte-stimulating hormone alpha" evidence="1">
    <location>
        <begin position="141"/>
        <end position="153"/>
    </location>
</feature>
<feature type="peptide" id="PRO_0000025138" description="Corticotropin-like intermediary peptide" evidence="1">
    <location>
        <begin position="159"/>
        <end position="179"/>
    </location>
</feature>
<feature type="peptide" id="PRO_0000025139" description="Lipotropin beta" evidence="1">
    <location>
        <begin position="182"/>
        <end position="260"/>
    </location>
</feature>
<feature type="peptide" id="PRO_0000025140" description="Lipotropin gamma" evidence="1">
    <location>
        <begin position="182"/>
        <end position="227"/>
    </location>
</feature>
<feature type="peptide" id="PRO_0000025141" description="Melanocyte-stimulating hormone beta" evidence="1">
    <location>
        <begin position="211"/>
        <end position="227"/>
    </location>
</feature>
<feature type="peptide" id="PRO_0000025142" description="Beta-endorphin" evidence="1">
    <location>
        <begin position="230"/>
        <end position="260"/>
    </location>
</feature>
<feature type="peptide" id="PRO_0000025143" description="Met-enkephalin" evidence="1">
    <location>
        <begin position="230"/>
        <end position="234"/>
    </location>
</feature>
<feature type="modified residue" description="Pyrrolidone carboxylic acid" evidence="1">
    <location>
        <position position="26"/>
    </location>
</feature>
<feature type="modified residue" description="Phenylalanine amide" evidence="1">
    <location>
        <position position="86"/>
    </location>
</feature>
<feature type="modified residue" description="Valine amide" evidence="1">
    <location>
        <position position="153"/>
    </location>
</feature>
<feature type="glycosylation site" description="N-linked (GlcNAc...) asparagine" evidence="3">
    <location>
        <position position="90"/>
    </location>
</feature>
<organism>
    <name type="scientific">Pelophylax ridibundus</name>
    <name type="common">Marsh frog</name>
    <name type="synonym">Rana ridibunda</name>
    <dbReference type="NCBI Taxonomy" id="8406"/>
    <lineage>
        <taxon>Eukaryota</taxon>
        <taxon>Metazoa</taxon>
        <taxon>Chordata</taxon>
        <taxon>Craniata</taxon>
        <taxon>Vertebrata</taxon>
        <taxon>Euteleostomi</taxon>
        <taxon>Amphibia</taxon>
        <taxon>Batrachia</taxon>
        <taxon>Anura</taxon>
        <taxon>Neobatrachia</taxon>
        <taxon>Ranoidea</taxon>
        <taxon>Ranidae</taxon>
        <taxon>Pelophylax</taxon>
    </lineage>
</organism>
<evidence type="ECO:0000250" key="1"/>
<evidence type="ECO:0000250" key="2">
    <source>
        <dbReference type="UniProtKB" id="P01193"/>
    </source>
</evidence>
<evidence type="ECO:0000255" key="3"/>
<evidence type="ECO:0000305" key="4"/>
<sequence>MLQPVWSCILALLGVFIFHVGEVRSQCWESNKCTDLSSEDGILECIKACKMDLSAESPVFPGNGHMQPLSENIRKYVMSHFRWNKFGRRNSTSNDNNNGGYKREDIANYPILNLLTGSDNQNTQQGIMEDEAVDRQDSKRSYSMEHFRWGKPVGKKRRPIKVFPTDAEEESSEIFPLELRRELSLEFDYPDTNSEEDLDDGELLDGPVKKDRKYKMHHFRWEGPPKDKRYGGFMTPERSQTPLMTLFKNAIIKNAHKKGQ</sequence>
<keyword id="KW-0027">Amidation</keyword>
<keyword id="KW-0165">Cleavage on pair of basic residues</keyword>
<keyword id="KW-0257">Endorphin</keyword>
<keyword id="KW-0325">Glycoprotein</keyword>
<keyword id="KW-0372">Hormone</keyword>
<keyword id="KW-0873">Pyrrolidone carboxylic acid</keyword>
<keyword id="KW-0964">Secreted</keyword>
<keyword id="KW-0732">Signal</keyword>